<protein>
    <recommendedName>
        <fullName>High mobility group protein 1.2</fullName>
    </recommendedName>
</protein>
<dbReference type="EMBL" id="AF056577">
    <property type="protein sequence ID" value="AAC78599.1"/>
    <property type="molecule type" value="mRNA"/>
</dbReference>
<dbReference type="EMBL" id="FO080618">
    <property type="protein sequence ID" value="CCD83369.1"/>
    <property type="molecule type" value="Genomic_DNA"/>
</dbReference>
<dbReference type="EMBL" id="FO080618">
    <property type="protein sequence ID" value="CCD83370.1"/>
    <property type="molecule type" value="Genomic_DNA"/>
</dbReference>
<dbReference type="EMBL" id="FO080618">
    <property type="protein sequence ID" value="CCD83371.1"/>
    <property type="molecule type" value="Genomic_DNA"/>
</dbReference>
<dbReference type="PIR" id="T43009">
    <property type="entry name" value="T43009"/>
</dbReference>
<dbReference type="RefSeq" id="NP_001022599.1">
    <molecule id="Q09390-2"/>
    <property type="nucleotide sequence ID" value="NM_001027428.6"/>
</dbReference>
<dbReference type="RefSeq" id="NP_001022600.1">
    <property type="nucleotide sequence ID" value="NM_001027429.4"/>
</dbReference>
<dbReference type="RefSeq" id="NP_001380090.1">
    <molecule id="Q09390-1"/>
    <property type="nucleotide sequence ID" value="NM_001392119.1"/>
</dbReference>
<dbReference type="RefSeq" id="NP_001380091.1">
    <molecule id="Q09390-3"/>
    <property type="nucleotide sequence ID" value="NM_001392120.1"/>
</dbReference>
<dbReference type="RefSeq" id="NP_498375.1">
    <property type="nucleotide sequence ID" value="NM_065974.7"/>
</dbReference>
<dbReference type="SMR" id="Q09390"/>
<dbReference type="BioGRID" id="41110">
    <property type="interactions" value="38"/>
</dbReference>
<dbReference type="FunCoup" id="Q09390">
    <property type="interactions" value="2075"/>
</dbReference>
<dbReference type="IntAct" id="Q09390">
    <property type="interactions" value="4"/>
</dbReference>
<dbReference type="STRING" id="6239.F47D12.4a.1"/>
<dbReference type="PaxDb" id="6239-F47D12.4a.1"/>
<dbReference type="PeptideAtlas" id="Q09390"/>
<dbReference type="EnsemblMetazoa" id="F47D12.4a.1">
    <molecule id="Q09390-1"/>
    <property type="protein sequence ID" value="F47D12.4a.1"/>
    <property type="gene ID" value="WBGene00001972"/>
</dbReference>
<dbReference type="EnsemblMetazoa" id="F47D12.4b.1">
    <molecule id="Q09390-2"/>
    <property type="protein sequence ID" value="F47D12.4b.1"/>
    <property type="gene ID" value="WBGene00001972"/>
</dbReference>
<dbReference type="EnsemblMetazoa" id="F47D12.4c.1">
    <molecule id="Q09390-3"/>
    <property type="protein sequence ID" value="F47D12.4c.1"/>
    <property type="gene ID" value="WBGene00001972"/>
</dbReference>
<dbReference type="GeneID" id="175890"/>
<dbReference type="KEGG" id="cel:CELE_F47D12.4"/>
<dbReference type="UCSC" id="F47D12.4a.1">
    <molecule id="Q09390-1"/>
    <property type="organism name" value="c. elegans"/>
</dbReference>
<dbReference type="AGR" id="WB:WBGene00001972"/>
<dbReference type="CTD" id="175890"/>
<dbReference type="WormBase" id="F47D12.4a">
    <molecule id="Q09390-1"/>
    <property type="protein sequence ID" value="CE26923"/>
    <property type="gene ID" value="WBGene00001972"/>
    <property type="gene designation" value="hmg-1.2"/>
</dbReference>
<dbReference type="WormBase" id="F47D12.4b">
    <molecule id="Q09390-2"/>
    <property type="protein sequence ID" value="CE28233"/>
    <property type="gene ID" value="WBGene00001972"/>
    <property type="gene designation" value="hmg-1.2"/>
</dbReference>
<dbReference type="WormBase" id="F47D12.4c">
    <molecule id="Q09390-3"/>
    <property type="protein sequence ID" value="CE28234"/>
    <property type="gene ID" value="WBGene00001972"/>
    <property type="gene designation" value="hmg-1.2"/>
</dbReference>
<dbReference type="eggNOG" id="KOG0381">
    <property type="taxonomic scope" value="Eukaryota"/>
</dbReference>
<dbReference type="GeneTree" id="ENSGT00940000153299"/>
<dbReference type="InParanoid" id="Q09390"/>
<dbReference type="OMA" id="PHSANEV"/>
<dbReference type="OrthoDB" id="1919336at2759"/>
<dbReference type="PhylomeDB" id="Q09390"/>
<dbReference type="Reactome" id="R-CEL-140342">
    <property type="pathway name" value="Apoptosis induced DNA fragmentation"/>
</dbReference>
<dbReference type="Reactome" id="R-CEL-5620971">
    <property type="pathway name" value="Pyroptosis"/>
</dbReference>
<dbReference type="Reactome" id="R-CEL-5686938">
    <property type="pathway name" value="Regulation of TLR by endogenous ligand"/>
</dbReference>
<dbReference type="Reactome" id="R-CEL-6798695">
    <property type="pathway name" value="Neutrophil degranulation"/>
</dbReference>
<dbReference type="SignaLink" id="Q09390"/>
<dbReference type="PRO" id="PR:Q09390"/>
<dbReference type="Proteomes" id="UP000001940">
    <property type="component" value="Chromosome III"/>
</dbReference>
<dbReference type="Bgee" id="WBGene00001972">
    <property type="expression patterns" value="Expressed in pharyngeal muscle cell (C elegans) and 4 other cell types or tissues"/>
</dbReference>
<dbReference type="GO" id="GO:0005634">
    <property type="term" value="C:nucleus"/>
    <property type="evidence" value="ECO:0000314"/>
    <property type="project" value="WormBase"/>
</dbReference>
<dbReference type="GO" id="GO:0000976">
    <property type="term" value="F:transcription cis-regulatory region binding"/>
    <property type="evidence" value="ECO:0000314"/>
    <property type="project" value="WormBase"/>
</dbReference>
<dbReference type="GO" id="GO:0001708">
    <property type="term" value="P:cell fate specification"/>
    <property type="evidence" value="ECO:0000315"/>
    <property type="project" value="WormBase"/>
</dbReference>
<dbReference type="GO" id="GO:0008406">
    <property type="term" value="P:gonad development"/>
    <property type="evidence" value="ECO:0000315"/>
    <property type="project" value="WormBase"/>
</dbReference>
<dbReference type="GO" id="GO:0045944">
    <property type="term" value="P:positive regulation of transcription by RNA polymerase II"/>
    <property type="evidence" value="ECO:0000315"/>
    <property type="project" value="WormBase"/>
</dbReference>
<dbReference type="GO" id="GO:0040025">
    <property type="term" value="P:vulval development"/>
    <property type="evidence" value="ECO:0000315"/>
    <property type="project" value="WormBase"/>
</dbReference>
<dbReference type="GO" id="GO:0016055">
    <property type="term" value="P:Wnt signaling pathway"/>
    <property type="evidence" value="ECO:0000316"/>
    <property type="project" value="WormBase"/>
</dbReference>
<dbReference type="CDD" id="cd21978">
    <property type="entry name" value="HMG-box_HMGB_rpt1"/>
    <property type="match status" value="1"/>
</dbReference>
<dbReference type="FunFam" id="1.10.30.10:FF:000016">
    <property type="entry name" value="FACT complex subunit SSRP1"/>
    <property type="match status" value="1"/>
</dbReference>
<dbReference type="FunFam" id="1.10.30.10:FF:000042">
    <property type="entry name" value="High mobility group protein 1.2"/>
    <property type="match status" value="1"/>
</dbReference>
<dbReference type="Gene3D" id="1.10.30.10">
    <property type="entry name" value="High mobility group box domain"/>
    <property type="match status" value="2"/>
</dbReference>
<dbReference type="InterPro" id="IPR009071">
    <property type="entry name" value="HMG_box_dom"/>
</dbReference>
<dbReference type="InterPro" id="IPR036910">
    <property type="entry name" value="HMG_box_dom_sf"/>
</dbReference>
<dbReference type="InterPro" id="IPR050342">
    <property type="entry name" value="HMGB"/>
</dbReference>
<dbReference type="PANTHER" id="PTHR48112:SF32">
    <property type="entry name" value="HIGH MOBILITY GROUP PROTEIN B3"/>
    <property type="match status" value="1"/>
</dbReference>
<dbReference type="PANTHER" id="PTHR48112">
    <property type="entry name" value="HIGH MOBILITY GROUP PROTEIN DSP1"/>
    <property type="match status" value="1"/>
</dbReference>
<dbReference type="Pfam" id="PF00505">
    <property type="entry name" value="HMG_box"/>
    <property type="match status" value="1"/>
</dbReference>
<dbReference type="Pfam" id="PF09011">
    <property type="entry name" value="HMG_box_2"/>
    <property type="match status" value="1"/>
</dbReference>
<dbReference type="PRINTS" id="PR00886">
    <property type="entry name" value="HIGHMOBLTY12"/>
</dbReference>
<dbReference type="SMART" id="SM00398">
    <property type="entry name" value="HMG"/>
    <property type="match status" value="2"/>
</dbReference>
<dbReference type="SUPFAM" id="SSF47095">
    <property type="entry name" value="HMG-box"/>
    <property type="match status" value="2"/>
</dbReference>
<dbReference type="PROSITE" id="PS50118">
    <property type="entry name" value="HMG_BOX_2"/>
    <property type="match status" value="2"/>
</dbReference>
<evidence type="ECO:0000255" key="1">
    <source>
        <dbReference type="PROSITE-ProRule" id="PRU00267"/>
    </source>
</evidence>
<evidence type="ECO:0000256" key="2">
    <source>
        <dbReference type="SAM" id="MobiDB-lite"/>
    </source>
</evidence>
<evidence type="ECO:0000305" key="3"/>
<keyword id="KW-0025">Alternative splicing</keyword>
<keyword id="KW-0238">DNA-binding</keyword>
<keyword id="KW-0539">Nucleus</keyword>
<keyword id="KW-1185">Reference proteome</keyword>
<keyword id="KW-0677">Repeat</keyword>
<gene>
    <name type="primary">hmg-1.2</name>
    <name type="ORF">F47D12.4</name>
</gene>
<comment type="interaction">
    <interactant intactId="EBI-2414021">
        <id>Q09390</id>
    </interactant>
    <interactant intactId="EBI-320910">
        <id>G5EBR0</id>
        <label>lir-1</label>
    </interactant>
    <organismsDiffer>false</organismsDiffer>
    <experiments>3</experiments>
</comment>
<comment type="subcellular location">
    <subcellularLocation>
        <location evidence="3">Nucleus</location>
    </subcellularLocation>
</comment>
<comment type="alternative products">
    <event type="alternative splicing"/>
    <isoform>
        <id>Q09390-1</id>
        <name>a</name>
        <sequence type="displayed"/>
    </isoform>
    <isoform>
        <id>Q09390-2</id>
        <name>b</name>
        <sequence type="described" ref="VSP_002189"/>
    </isoform>
    <isoform>
        <id>Q09390-3</id>
        <name>c</name>
        <sequence type="described" ref="VSP_002190"/>
    </isoform>
</comment>
<comment type="similarity">
    <text evidence="3">Belongs to the HMGB family.</text>
</comment>
<sequence>MNSGYSANIFPSSSSPTLYQSHQLQPNPSATMYQATPRDMGKPPVRGKTSPYGFFVKMCYEEHKKKYPNENVQVTEISKKCSEKWKTMVDDEKRRFYELAQKDAERYQAEVSVAAYGGEDAMRKRKRAKKDPHAPKRALSAFFFYSQDKRPEIQAGHPDWKVGQVAQELGKMWKLVPQETKDMYEQKAQADKDRYADEMRNYKAEMQKMSGMDHYDDDNIHHVVHVEDINSQNIS</sequence>
<feature type="chain" id="PRO_0000048602" description="High mobility group protein 1.2">
    <location>
        <begin position="1"/>
        <end position="235"/>
    </location>
</feature>
<feature type="DNA-binding region" description="HMG box 1" evidence="1">
    <location>
        <begin position="47"/>
        <end position="117"/>
    </location>
</feature>
<feature type="DNA-binding region" description="HMG box 2" evidence="1">
    <location>
        <begin position="135"/>
        <end position="203"/>
    </location>
</feature>
<feature type="region of interest" description="Disordered" evidence="2">
    <location>
        <begin position="1"/>
        <end position="47"/>
    </location>
</feature>
<feature type="compositionally biased region" description="Polar residues" evidence="2">
    <location>
        <begin position="1"/>
        <end position="34"/>
    </location>
</feature>
<feature type="splice variant" id="VSP_002189" description="In isoform b." evidence="3">
    <location>
        <position position="25"/>
    </location>
</feature>
<feature type="splice variant" id="VSP_002190" description="In isoform c." evidence="3">
    <location>
        <begin position="111"/>
        <end position="112"/>
    </location>
</feature>
<reference key="1">
    <citation type="submission" date="1998-04" db="EMBL/GenBank/DDBJ databases">
        <title>The high mobility group proteins of Caenorhabditis elegans.</title>
        <authorList>
            <person name="Kurz T."/>
            <person name="Schulze E."/>
        </authorList>
    </citation>
    <scope>NUCLEOTIDE SEQUENCE [MRNA] (ISOFORM A)</scope>
    <source>
        <strain>Bristol N2</strain>
    </source>
</reference>
<reference key="2">
    <citation type="journal article" date="1998" name="Science">
        <title>Genome sequence of the nematode C. elegans: a platform for investigating biology.</title>
        <authorList>
            <consortium name="The C. elegans sequencing consortium"/>
        </authorList>
    </citation>
    <scope>NUCLEOTIDE SEQUENCE [LARGE SCALE GENOMIC DNA]</scope>
    <scope>ALTERNATIVE SPLICING</scope>
    <source>
        <strain>Bristol N2</strain>
    </source>
</reference>
<proteinExistence type="evidence at protein level"/>
<organism>
    <name type="scientific">Caenorhabditis elegans</name>
    <dbReference type="NCBI Taxonomy" id="6239"/>
    <lineage>
        <taxon>Eukaryota</taxon>
        <taxon>Metazoa</taxon>
        <taxon>Ecdysozoa</taxon>
        <taxon>Nematoda</taxon>
        <taxon>Chromadorea</taxon>
        <taxon>Rhabditida</taxon>
        <taxon>Rhabditina</taxon>
        <taxon>Rhabditomorpha</taxon>
        <taxon>Rhabditoidea</taxon>
        <taxon>Rhabditidae</taxon>
        <taxon>Peloderinae</taxon>
        <taxon>Caenorhabditis</taxon>
    </lineage>
</organism>
<accession>Q09390</accession>
<accession>O77096</accession>
<name>HMGBH_CAEEL</name>